<proteinExistence type="inferred from homology"/>
<evidence type="ECO:0000255" key="1"/>
<evidence type="ECO:0000305" key="2"/>
<organism>
    <name type="scientific">Pyrococcus horikoshii (strain ATCC 700860 / DSM 12428 / JCM 9974 / NBRC 100139 / OT-3)</name>
    <dbReference type="NCBI Taxonomy" id="70601"/>
    <lineage>
        <taxon>Archaea</taxon>
        <taxon>Methanobacteriati</taxon>
        <taxon>Methanobacteriota</taxon>
        <taxon>Thermococci</taxon>
        <taxon>Thermococcales</taxon>
        <taxon>Thermococcaceae</taxon>
        <taxon>Pyrococcus</taxon>
    </lineage>
</organism>
<reference key="1">
    <citation type="journal article" date="1998" name="DNA Res.">
        <title>Complete sequence and gene organization of the genome of a hyper-thermophilic archaebacterium, Pyrococcus horikoshii OT3.</title>
        <authorList>
            <person name="Kawarabayasi Y."/>
            <person name="Sawada M."/>
            <person name="Horikawa H."/>
            <person name="Haikawa Y."/>
            <person name="Hino Y."/>
            <person name="Yamamoto S."/>
            <person name="Sekine M."/>
            <person name="Baba S."/>
            <person name="Kosugi H."/>
            <person name="Hosoyama A."/>
            <person name="Nagai Y."/>
            <person name="Sakai M."/>
            <person name="Ogura K."/>
            <person name="Otsuka R."/>
            <person name="Nakazawa H."/>
            <person name="Takamiya M."/>
            <person name="Ohfuku Y."/>
            <person name="Funahashi T."/>
            <person name="Tanaka T."/>
            <person name="Kudoh Y."/>
            <person name="Yamazaki J."/>
            <person name="Kushida N."/>
            <person name="Oguchi A."/>
            <person name="Aoki K."/>
            <person name="Yoshizawa T."/>
            <person name="Nakamura Y."/>
            <person name="Robb F.T."/>
            <person name="Horikoshi K."/>
            <person name="Masuchi Y."/>
            <person name="Shizuya H."/>
            <person name="Kikuchi H."/>
        </authorList>
    </citation>
    <scope>NUCLEOTIDE SEQUENCE [LARGE SCALE GENOMIC DNA]</scope>
    <source>
        <strain>ATCC 700860 / DSM 12428 / JCM 9974 / NBRC 100139 / OT-3</strain>
    </source>
</reference>
<gene>
    <name type="primary">tmk</name>
    <name type="ordered locus">PH1695</name>
</gene>
<accession>O59366</accession>
<name>KTHY_PYRHO</name>
<comment type="catalytic activity">
    <reaction>
        <text>dTMP + ATP = dTDP + ADP</text>
        <dbReference type="Rhea" id="RHEA:13517"/>
        <dbReference type="ChEBI" id="CHEBI:30616"/>
        <dbReference type="ChEBI" id="CHEBI:58369"/>
        <dbReference type="ChEBI" id="CHEBI:63528"/>
        <dbReference type="ChEBI" id="CHEBI:456216"/>
        <dbReference type="EC" id="2.7.4.9"/>
    </reaction>
</comment>
<comment type="similarity">
    <text evidence="2">Belongs to the thymidylate kinase family.</text>
</comment>
<sequence>MRGYFIVLEGIDGSGKTTQAKLLAEWFEDKGYEVLLTKEPTDSELGKLIRRIILEESVIDGSKISYEAEALLFAADRAEHVKKIILPALSEGKVVICDRYFYSSLAYQWARGLDLNWLIQVNSFAPRPDLAILLDLPVKESLRRIKLRGTLTEFDKIVELQRKVRHNYLKLAEMFPEMRIVNALSSIEDIHSDIVALVKHELLGL</sequence>
<feature type="chain" id="PRO_0000155395" description="Probable thymidylate kinase">
    <location>
        <begin position="1"/>
        <end position="205"/>
    </location>
</feature>
<feature type="binding site" evidence="1">
    <location>
        <begin position="10"/>
        <end position="17"/>
    </location>
    <ligand>
        <name>ATP</name>
        <dbReference type="ChEBI" id="CHEBI:30616"/>
    </ligand>
</feature>
<protein>
    <recommendedName>
        <fullName>Probable thymidylate kinase</fullName>
        <ecNumber>2.7.4.9</ecNumber>
    </recommendedName>
    <alternativeName>
        <fullName>dTMP kinase</fullName>
    </alternativeName>
</protein>
<dbReference type="EC" id="2.7.4.9"/>
<dbReference type="EMBL" id="BA000001">
    <property type="protein sequence ID" value="BAA30808.1"/>
    <property type="molecule type" value="Genomic_DNA"/>
</dbReference>
<dbReference type="PIR" id="A71177">
    <property type="entry name" value="A71177"/>
</dbReference>
<dbReference type="RefSeq" id="WP_010885760.1">
    <property type="nucleotide sequence ID" value="NC_000961.1"/>
</dbReference>
<dbReference type="SMR" id="O59366"/>
<dbReference type="STRING" id="70601.gene:9378690"/>
<dbReference type="EnsemblBacteria" id="BAA30808">
    <property type="protein sequence ID" value="BAA30808"/>
    <property type="gene ID" value="BAA30808"/>
</dbReference>
<dbReference type="GeneID" id="1442541"/>
<dbReference type="KEGG" id="pho:PH1695"/>
<dbReference type="eggNOG" id="arCOG01891">
    <property type="taxonomic scope" value="Archaea"/>
</dbReference>
<dbReference type="OrthoDB" id="43083at2157"/>
<dbReference type="Proteomes" id="UP000000752">
    <property type="component" value="Chromosome"/>
</dbReference>
<dbReference type="GO" id="GO:0005737">
    <property type="term" value="C:cytoplasm"/>
    <property type="evidence" value="ECO:0007669"/>
    <property type="project" value="TreeGrafter"/>
</dbReference>
<dbReference type="GO" id="GO:0005524">
    <property type="term" value="F:ATP binding"/>
    <property type="evidence" value="ECO:0007669"/>
    <property type="project" value="UniProtKB-UniRule"/>
</dbReference>
<dbReference type="GO" id="GO:0004798">
    <property type="term" value="F:dTMP kinase activity"/>
    <property type="evidence" value="ECO:0007669"/>
    <property type="project" value="UniProtKB-UniRule"/>
</dbReference>
<dbReference type="GO" id="GO:0006233">
    <property type="term" value="P:dTDP biosynthetic process"/>
    <property type="evidence" value="ECO:0007669"/>
    <property type="project" value="InterPro"/>
</dbReference>
<dbReference type="GO" id="GO:0006235">
    <property type="term" value="P:dTTP biosynthetic process"/>
    <property type="evidence" value="ECO:0007669"/>
    <property type="project" value="UniProtKB-UniRule"/>
</dbReference>
<dbReference type="GO" id="GO:0006227">
    <property type="term" value="P:dUDP biosynthetic process"/>
    <property type="evidence" value="ECO:0007669"/>
    <property type="project" value="TreeGrafter"/>
</dbReference>
<dbReference type="CDD" id="cd01672">
    <property type="entry name" value="TMPK"/>
    <property type="match status" value="1"/>
</dbReference>
<dbReference type="FunFam" id="3.40.50.300:FF:000225">
    <property type="entry name" value="Thymidylate kinase"/>
    <property type="match status" value="1"/>
</dbReference>
<dbReference type="Gene3D" id="3.40.50.300">
    <property type="entry name" value="P-loop containing nucleotide triphosphate hydrolases"/>
    <property type="match status" value="1"/>
</dbReference>
<dbReference type="HAMAP" id="MF_00165">
    <property type="entry name" value="Thymidylate_kinase"/>
    <property type="match status" value="1"/>
</dbReference>
<dbReference type="InterPro" id="IPR027417">
    <property type="entry name" value="P-loop_NTPase"/>
</dbReference>
<dbReference type="InterPro" id="IPR039430">
    <property type="entry name" value="Thymidylate_kin-like_dom"/>
</dbReference>
<dbReference type="InterPro" id="IPR018095">
    <property type="entry name" value="Thymidylate_kin_CS"/>
</dbReference>
<dbReference type="InterPro" id="IPR018094">
    <property type="entry name" value="Thymidylate_kinase"/>
</dbReference>
<dbReference type="NCBIfam" id="TIGR00041">
    <property type="entry name" value="DTMP_kinase"/>
    <property type="match status" value="1"/>
</dbReference>
<dbReference type="PANTHER" id="PTHR10344">
    <property type="entry name" value="THYMIDYLATE KINASE"/>
    <property type="match status" value="1"/>
</dbReference>
<dbReference type="PANTHER" id="PTHR10344:SF4">
    <property type="entry name" value="UMP-CMP KINASE 2, MITOCHONDRIAL"/>
    <property type="match status" value="1"/>
</dbReference>
<dbReference type="Pfam" id="PF02223">
    <property type="entry name" value="Thymidylate_kin"/>
    <property type="match status" value="1"/>
</dbReference>
<dbReference type="SUPFAM" id="SSF52540">
    <property type="entry name" value="P-loop containing nucleoside triphosphate hydrolases"/>
    <property type="match status" value="1"/>
</dbReference>
<dbReference type="PROSITE" id="PS01331">
    <property type="entry name" value="THYMIDYLATE_KINASE"/>
    <property type="match status" value="1"/>
</dbReference>
<keyword id="KW-0067">ATP-binding</keyword>
<keyword id="KW-0418">Kinase</keyword>
<keyword id="KW-0545">Nucleotide biosynthesis</keyword>
<keyword id="KW-0547">Nucleotide-binding</keyword>
<keyword id="KW-0808">Transferase</keyword>